<proteinExistence type="inferred from homology"/>
<keyword id="KW-0963">Cytoplasm</keyword>
<keyword id="KW-0224">Dipeptidase</keyword>
<keyword id="KW-0378">Hydrolase</keyword>
<keyword id="KW-0645">Protease</keyword>
<keyword id="KW-0720">Serine protease</keyword>
<evidence type="ECO:0000255" key="1">
    <source>
        <dbReference type="HAMAP-Rule" id="MF_00510"/>
    </source>
</evidence>
<name>PEPE_ECO7I</name>
<sequence length="229" mass="24570">MELLLLSNSTLPGKAWLEHALPLIAEQLQGRRSAVFIPFAGVTQTWDDYTAKTAAVLAPLGVSVTGIHSVVDPVAAIENAEIVIVGGGNTFQLLKQCRERGLLAPITDVVKRGALYIGWSAGANLACPTIRTTNDMPIVDPQGFDALNLFPLQINPHFTNALPEGHKGETREQRIRELLVVAPELTIIGLPEGNWITVSKGHATLGGPNTTYVFKAGEEAVPLEAGHRF</sequence>
<accession>B7NRV3</accession>
<reference key="1">
    <citation type="journal article" date="2009" name="PLoS Genet.">
        <title>Organised genome dynamics in the Escherichia coli species results in highly diverse adaptive paths.</title>
        <authorList>
            <person name="Touchon M."/>
            <person name="Hoede C."/>
            <person name="Tenaillon O."/>
            <person name="Barbe V."/>
            <person name="Baeriswyl S."/>
            <person name="Bidet P."/>
            <person name="Bingen E."/>
            <person name="Bonacorsi S."/>
            <person name="Bouchier C."/>
            <person name="Bouvet O."/>
            <person name="Calteau A."/>
            <person name="Chiapello H."/>
            <person name="Clermont O."/>
            <person name="Cruveiller S."/>
            <person name="Danchin A."/>
            <person name="Diard M."/>
            <person name="Dossat C."/>
            <person name="Karoui M.E."/>
            <person name="Frapy E."/>
            <person name="Garry L."/>
            <person name="Ghigo J.M."/>
            <person name="Gilles A.M."/>
            <person name="Johnson J."/>
            <person name="Le Bouguenec C."/>
            <person name="Lescat M."/>
            <person name="Mangenot S."/>
            <person name="Martinez-Jehanne V."/>
            <person name="Matic I."/>
            <person name="Nassif X."/>
            <person name="Oztas S."/>
            <person name="Petit M.A."/>
            <person name="Pichon C."/>
            <person name="Rouy Z."/>
            <person name="Ruf C.S."/>
            <person name="Schneider D."/>
            <person name="Tourret J."/>
            <person name="Vacherie B."/>
            <person name="Vallenet D."/>
            <person name="Medigue C."/>
            <person name="Rocha E.P.C."/>
            <person name="Denamur E."/>
        </authorList>
    </citation>
    <scope>NUCLEOTIDE SEQUENCE [LARGE SCALE GENOMIC DNA]</scope>
    <source>
        <strain>IAI39 / ExPEC</strain>
    </source>
</reference>
<feature type="chain" id="PRO_1000127242" description="Peptidase E">
    <location>
        <begin position="1"/>
        <end position="229"/>
    </location>
</feature>
<feature type="active site" description="Charge relay system" evidence="1">
    <location>
        <position position="120"/>
    </location>
</feature>
<feature type="active site" description="Charge relay system" evidence="1">
    <location>
        <position position="135"/>
    </location>
</feature>
<feature type="active site" description="Charge relay system" evidence="1">
    <location>
        <position position="157"/>
    </location>
</feature>
<comment type="function">
    <text evidence="1">Hydrolyzes dipeptides containing N-terminal aspartate residues. May play a role in allowing the cell to use peptide aspartate to spare carbon otherwise required for the synthesis of the aspartate family of amino acids.</text>
</comment>
<comment type="catalytic activity">
    <reaction evidence="1">
        <text>Dipeptidase E catalyzes the hydrolysis of dipeptides Asp-|-Xaa. It does not act on peptides with N-terminal Glu, Asn or Gln, nor does it cleave isoaspartyl peptides.</text>
        <dbReference type="EC" id="3.4.13.21"/>
    </reaction>
</comment>
<comment type="subcellular location">
    <subcellularLocation>
        <location evidence="1">Cytoplasm</location>
    </subcellularLocation>
</comment>
<comment type="similarity">
    <text evidence="1">Belongs to the peptidase S51 family.</text>
</comment>
<dbReference type="EC" id="3.4.13.21" evidence="1"/>
<dbReference type="EMBL" id="CU928164">
    <property type="protein sequence ID" value="CAR20516.1"/>
    <property type="molecule type" value="Genomic_DNA"/>
</dbReference>
<dbReference type="RefSeq" id="WP_000421763.1">
    <property type="nucleotide sequence ID" value="NC_011750.1"/>
</dbReference>
<dbReference type="RefSeq" id="YP_002410284.1">
    <property type="nucleotide sequence ID" value="NC_011750.1"/>
</dbReference>
<dbReference type="SMR" id="B7NRV3"/>
<dbReference type="STRING" id="585057.ECIAI39_4410"/>
<dbReference type="MEROPS" id="S51.001"/>
<dbReference type="GeneID" id="93777874"/>
<dbReference type="KEGG" id="ect:ECIAI39_4410"/>
<dbReference type="PATRIC" id="fig|585057.6.peg.4557"/>
<dbReference type="HOGENOM" id="CLU_071689_0_0_6"/>
<dbReference type="Proteomes" id="UP000000749">
    <property type="component" value="Chromosome"/>
</dbReference>
<dbReference type="GO" id="GO:0005737">
    <property type="term" value="C:cytoplasm"/>
    <property type="evidence" value="ECO:0007669"/>
    <property type="project" value="UniProtKB-SubCell"/>
</dbReference>
<dbReference type="GO" id="GO:0016805">
    <property type="term" value="F:dipeptidase activity"/>
    <property type="evidence" value="ECO:0007669"/>
    <property type="project" value="UniProtKB-UniRule"/>
</dbReference>
<dbReference type="GO" id="GO:0008236">
    <property type="term" value="F:serine-type peptidase activity"/>
    <property type="evidence" value="ECO:0007669"/>
    <property type="project" value="UniProtKB-KW"/>
</dbReference>
<dbReference type="GO" id="GO:0006508">
    <property type="term" value="P:proteolysis"/>
    <property type="evidence" value="ECO:0007669"/>
    <property type="project" value="UniProtKB-UniRule"/>
</dbReference>
<dbReference type="CDD" id="cd03146">
    <property type="entry name" value="GAT1_Peptidase_E"/>
    <property type="match status" value="1"/>
</dbReference>
<dbReference type="FunFam" id="3.40.50.880:FF:000007">
    <property type="entry name" value="Peptidase E"/>
    <property type="match status" value="1"/>
</dbReference>
<dbReference type="Gene3D" id="3.40.50.880">
    <property type="match status" value="1"/>
</dbReference>
<dbReference type="HAMAP" id="MF_00510">
    <property type="entry name" value="Peptidase_E"/>
    <property type="match status" value="1"/>
</dbReference>
<dbReference type="InterPro" id="IPR029062">
    <property type="entry name" value="Class_I_gatase-like"/>
</dbReference>
<dbReference type="InterPro" id="IPR005320">
    <property type="entry name" value="Peptidase_S51"/>
</dbReference>
<dbReference type="InterPro" id="IPR023172">
    <property type="entry name" value="Peptidase_S51_dipeptidase-E"/>
</dbReference>
<dbReference type="NCBIfam" id="NF003642">
    <property type="entry name" value="PRK05282.1"/>
    <property type="match status" value="1"/>
</dbReference>
<dbReference type="PANTHER" id="PTHR20842:SF0">
    <property type="entry name" value="ALPHA-ASPARTYL DIPEPTIDASE"/>
    <property type="match status" value="1"/>
</dbReference>
<dbReference type="PANTHER" id="PTHR20842">
    <property type="entry name" value="PROTEASE S51 ALPHA-ASPARTYL DIPEPTIDASE"/>
    <property type="match status" value="1"/>
</dbReference>
<dbReference type="Pfam" id="PF03575">
    <property type="entry name" value="Peptidase_S51"/>
    <property type="match status" value="1"/>
</dbReference>
<dbReference type="SUPFAM" id="SSF52317">
    <property type="entry name" value="Class I glutamine amidotransferase-like"/>
    <property type="match status" value="1"/>
</dbReference>
<organism>
    <name type="scientific">Escherichia coli O7:K1 (strain IAI39 / ExPEC)</name>
    <dbReference type="NCBI Taxonomy" id="585057"/>
    <lineage>
        <taxon>Bacteria</taxon>
        <taxon>Pseudomonadati</taxon>
        <taxon>Pseudomonadota</taxon>
        <taxon>Gammaproteobacteria</taxon>
        <taxon>Enterobacterales</taxon>
        <taxon>Enterobacteriaceae</taxon>
        <taxon>Escherichia</taxon>
    </lineage>
</organism>
<protein>
    <recommendedName>
        <fullName evidence="1">Peptidase E</fullName>
        <ecNumber evidence="1">3.4.13.21</ecNumber>
    </recommendedName>
    <alternativeName>
        <fullName evidence="1">Alpha-aspartyl dipeptidase</fullName>
    </alternativeName>
    <alternativeName>
        <fullName evidence="1">Asp-specific dipeptidase</fullName>
    </alternativeName>
    <alternativeName>
        <fullName evidence="1">Dipeptidase E</fullName>
    </alternativeName>
</protein>
<gene>
    <name evidence="1" type="primary">pepE</name>
    <name type="ordered locus">ECIAI39_4410</name>
</gene>